<keyword id="KW-0007">Acetylation</keyword>
<keyword id="KW-0158">Chromosome</keyword>
<keyword id="KW-0238">DNA-binding</keyword>
<keyword id="KW-1017">Isopeptide bond</keyword>
<keyword id="KW-0488">Methylation</keyword>
<keyword id="KW-0544">Nucleosome core</keyword>
<keyword id="KW-0539">Nucleus</keyword>
<keyword id="KW-0597">Phosphoprotein</keyword>
<keyword id="KW-1185">Reference proteome</keyword>
<keyword id="KW-0832">Ubl conjugation</keyword>
<gene>
    <name type="primary">His2A</name>
    <name type="synonym">H2a</name>
</gene>
<gene>
    <name type="ORF">GD24469</name>
</gene>
<name>H2A_DROSI</name>
<sequence length="124" mass="13363">MSGRGKGGKVKGKAKSRSNRAGLQFPVGRIHRLLRKGNYAERVGAGAPVYLAAVMEYLAAEVLELAGNAARDNKKTRIIPRHLQLAIRNDEELNKLLSGVTIAQGGVLPNIQAVLLPKKTEKKA</sequence>
<feature type="initiator methionine" description="Removed" evidence="1">
    <location>
        <position position="1"/>
    </location>
</feature>
<feature type="chain" id="PRO_0000055223" description="Histone H2A">
    <location>
        <begin position="2"/>
        <end position="124"/>
    </location>
</feature>
<feature type="region of interest" description="Disordered" evidence="3">
    <location>
        <begin position="1"/>
        <end position="21"/>
    </location>
</feature>
<feature type="compositionally biased region" description="Basic residues" evidence="3">
    <location>
        <begin position="1"/>
        <end position="18"/>
    </location>
</feature>
<feature type="modified residue" description="N-acetylserine" evidence="1">
    <location>
        <position position="2"/>
    </location>
</feature>
<feature type="modified residue" description="Phosphoserine" evidence="1">
    <location>
        <position position="2"/>
    </location>
</feature>
<feature type="modified residue" description="N6-succinyllysine" evidence="2">
    <location>
        <position position="36"/>
    </location>
</feature>
<feature type="modified residue" description="N5-methylglutamine" evidence="1">
    <location>
        <position position="104"/>
    </location>
</feature>
<feature type="modified residue" description="Phosphothreonine" evidence="1">
    <location>
        <position position="120"/>
    </location>
</feature>
<feature type="cross-link" description="Glycyl lysine isopeptide (Lys-Gly) (interchain with G-Cter in ubiquitin)" evidence="1">
    <location>
        <position position="119"/>
    </location>
</feature>
<dbReference type="EMBL" id="AB055959">
    <property type="protein sequence ID" value="BAC54548.1"/>
    <property type="molecule type" value="Genomic_DNA"/>
</dbReference>
<dbReference type="EMBL" id="CH984460">
    <property type="protein sequence ID" value="EDX15909.1"/>
    <property type="molecule type" value="Genomic_DNA"/>
</dbReference>
<dbReference type="EMBL" id="CH987256">
    <property type="protein sequence ID" value="EDX16003.1"/>
    <property type="molecule type" value="Genomic_DNA"/>
</dbReference>
<dbReference type="EMBL" id="CH989013">
    <property type="protein sequence ID" value="EDX16129.1"/>
    <property type="molecule type" value="Genomic_DNA"/>
</dbReference>
<dbReference type="EMBL" id="CH989564">
    <property type="protein sequence ID" value="EDX16175.1"/>
    <property type="molecule type" value="Genomic_DNA"/>
</dbReference>
<dbReference type="EMBL" id="CH989728">
    <property type="protein sequence ID" value="EDX16187.1"/>
    <property type="molecule type" value="Genomic_DNA"/>
</dbReference>
<dbReference type="EMBL" id="CH990890">
    <property type="protein sequence ID" value="EDX16244.1"/>
    <property type="molecule type" value="Genomic_DNA"/>
</dbReference>
<dbReference type="EMBL" id="CH991512">
    <property type="protein sequence ID" value="EDX16267.1"/>
    <property type="molecule type" value="Genomic_DNA"/>
</dbReference>
<dbReference type="EMBL" id="CM000366">
    <property type="protein sequence ID" value="EDX17492.1"/>
    <property type="molecule type" value="Genomic_DNA"/>
</dbReference>
<dbReference type="RefSeq" id="XP_002077189.2">
    <property type="nucleotide sequence ID" value="XM_002077153.2"/>
</dbReference>
<dbReference type="SMR" id="P84054"/>
<dbReference type="STRING" id="7240.P84054"/>
<dbReference type="EnsemblMetazoa" id="FBtr0224379">
    <property type="protein sequence ID" value="FBpp0222871"/>
    <property type="gene ID" value="FBgn0195804"/>
</dbReference>
<dbReference type="EnsemblMetazoa" id="XM_002077153.4">
    <property type="protein sequence ID" value="XP_002077189.3"/>
    <property type="gene ID" value="LOC6740317"/>
</dbReference>
<dbReference type="EnsemblMetazoa" id="XM_039296686.2">
    <property type="protein sequence ID" value="XP_039152620.1"/>
    <property type="gene ID" value="LOC120285260"/>
</dbReference>
<dbReference type="EnsemblMetazoa" id="XM_039296692.2">
    <property type="protein sequence ID" value="XP_039152626.1"/>
    <property type="gene ID" value="LOC120285261"/>
</dbReference>
<dbReference type="EnsemblMetazoa" id="XM_039296696.2">
    <property type="protein sequence ID" value="XP_039152630.1"/>
    <property type="gene ID" value="LOC120285262"/>
</dbReference>
<dbReference type="EnsemblMetazoa" id="XM_039296698.2">
    <property type="protein sequence ID" value="XP_039152632.1"/>
    <property type="gene ID" value="LOC120285263"/>
</dbReference>
<dbReference type="EnsemblMetazoa" id="XM_039296706.2">
    <property type="protein sequence ID" value="XP_039152640.1"/>
    <property type="gene ID" value="LOC120285264"/>
</dbReference>
<dbReference type="EnsemblMetazoa" id="XM_039296716.2">
    <property type="protein sequence ID" value="XP_039152650.1"/>
    <property type="gene ID" value="LOC120285265"/>
</dbReference>
<dbReference type="EnsemblMetazoa" id="XM_039296718.2">
    <property type="protein sequence ID" value="XP_039152652.1"/>
    <property type="gene ID" value="LOC120285266"/>
</dbReference>
<dbReference type="EnsemblMetazoa" id="XM_039298198.2">
    <property type="protein sequence ID" value="XP_039154132.1"/>
    <property type="gene ID" value="LOC120285542"/>
</dbReference>
<dbReference type="EnsemblMetazoa" id="XM_039298199.2">
    <property type="protein sequence ID" value="XP_039154133.1"/>
    <property type="gene ID" value="LOC120285543"/>
</dbReference>
<dbReference type="EnsemblMetazoa" id="XM_039298200.2">
    <property type="protein sequence ID" value="XP_039154134.1"/>
    <property type="gene ID" value="LOC120285544"/>
</dbReference>
<dbReference type="EnsemblMetazoa" id="XM_039298201.2">
    <property type="protein sequence ID" value="XP_039154135.1"/>
    <property type="gene ID" value="LOC120285545"/>
</dbReference>
<dbReference type="EnsemblMetazoa" id="XM_039298202.2">
    <property type="protein sequence ID" value="XP_039154136.1"/>
    <property type="gene ID" value="LOC120285546"/>
</dbReference>
<dbReference type="EnsemblMetazoa" id="XM_039298415.2">
    <property type="protein sequence ID" value="XP_039154349.1"/>
    <property type="gene ID" value="LOC120285799"/>
</dbReference>
<dbReference type="EnsemblMetazoa" id="XM_039298416.2">
    <property type="protein sequence ID" value="XP_039154350.1"/>
    <property type="gene ID" value="LOC120285800"/>
</dbReference>
<dbReference type="EnsemblMetazoa" id="XM_039298417.2">
    <property type="protein sequence ID" value="XP_039154351.1"/>
    <property type="gene ID" value="LOC120285801"/>
</dbReference>
<dbReference type="EnsemblMetazoa" id="XM_039298418.2">
    <property type="protein sequence ID" value="XP_039154352.1"/>
    <property type="gene ID" value="LOC120285802"/>
</dbReference>
<dbReference type="EnsemblMetazoa" id="XM_039298419.2">
    <property type="protein sequence ID" value="XP_039154353.1"/>
    <property type="gene ID" value="LOC120285803"/>
</dbReference>
<dbReference type="GeneID" id="6740317"/>
<dbReference type="HOGENOM" id="CLU_062828_3_3_1"/>
<dbReference type="OMA" id="NYCERIG"/>
<dbReference type="OrthoDB" id="7839361at2759"/>
<dbReference type="PhylomeDB" id="P84054"/>
<dbReference type="ChiTaRS" id="His2Av">
    <property type="organism name" value="fly"/>
</dbReference>
<dbReference type="Proteomes" id="UP000000304">
    <property type="component" value="Chromosome X"/>
</dbReference>
<dbReference type="Proteomes" id="UP000000304">
    <property type="component" value="Unassembled WGS sequence"/>
</dbReference>
<dbReference type="Bgee" id="FBgn0195804">
    <property type="expression patterns" value="Expressed in embryo and 3 other cell types or tissues"/>
</dbReference>
<dbReference type="GO" id="GO:0000786">
    <property type="term" value="C:nucleosome"/>
    <property type="evidence" value="ECO:0007669"/>
    <property type="project" value="UniProtKB-KW"/>
</dbReference>
<dbReference type="GO" id="GO:0005634">
    <property type="term" value="C:nucleus"/>
    <property type="evidence" value="ECO:0007669"/>
    <property type="project" value="UniProtKB-SubCell"/>
</dbReference>
<dbReference type="GO" id="GO:0005704">
    <property type="term" value="C:polytene chromosome band"/>
    <property type="evidence" value="ECO:0007669"/>
    <property type="project" value="EnsemblMetazoa"/>
</dbReference>
<dbReference type="GO" id="GO:0003677">
    <property type="term" value="F:DNA binding"/>
    <property type="evidence" value="ECO:0007669"/>
    <property type="project" value="UniProtKB-KW"/>
</dbReference>
<dbReference type="GO" id="GO:0046982">
    <property type="term" value="F:protein heterodimerization activity"/>
    <property type="evidence" value="ECO:0007669"/>
    <property type="project" value="InterPro"/>
</dbReference>
<dbReference type="GO" id="GO:0030527">
    <property type="term" value="F:structural constituent of chromatin"/>
    <property type="evidence" value="ECO:0007669"/>
    <property type="project" value="InterPro"/>
</dbReference>
<dbReference type="GO" id="GO:0007526">
    <property type="term" value="P:larval somatic muscle development"/>
    <property type="evidence" value="ECO:0007669"/>
    <property type="project" value="EnsemblMetazoa"/>
</dbReference>
<dbReference type="CDD" id="cd00074">
    <property type="entry name" value="HFD_H2A"/>
    <property type="match status" value="1"/>
</dbReference>
<dbReference type="FunFam" id="1.10.20.10:FF:000173">
    <property type="entry name" value="Histone H2A"/>
    <property type="match status" value="1"/>
</dbReference>
<dbReference type="Gene3D" id="1.10.20.10">
    <property type="entry name" value="Histone, subunit A"/>
    <property type="match status" value="1"/>
</dbReference>
<dbReference type="InterPro" id="IPR009072">
    <property type="entry name" value="Histone-fold"/>
</dbReference>
<dbReference type="InterPro" id="IPR002119">
    <property type="entry name" value="Histone_H2A"/>
</dbReference>
<dbReference type="InterPro" id="IPR007125">
    <property type="entry name" value="Histone_H2A/H2B/H3"/>
</dbReference>
<dbReference type="InterPro" id="IPR032454">
    <property type="entry name" value="Histone_H2A_C"/>
</dbReference>
<dbReference type="InterPro" id="IPR032458">
    <property type="entry name" value="Histone_H2A_CS"/>
</dbReference>
<dbReference type="PANTHER" id="PTHR23430">
    <property type="entry name" value="HISTONE H2A"/>
    <property type="match status" value="1"/>
</dbReference>
<dbReference type="Pfam" id="PF00125">
    <property type="entry name" value="Histone"/>
    <property type="match status" value="1"/>
</dbReference>
<dbReference type="Pfam" id="PF16211">
    <property type="entry name" value="Histone_H2A_C"/>
    <property type="match status" value="1"/>
</dbReference>
<dbReference type="PRINTS" id="PR00620">
    <property type="entry name" value="HISTONEH2A"/>
</dbReference>
<dbReference type="SMART" id="SM00414">
    <property type="entry name" value="H2A"/>
    <property type="match status" value="1"/>
</dbReference>
<dbReference type="SUPFAM" id="SSF47113">
    <property type="entry name" value="Histone-fold"/>
    <property type="match status" value="1"/>
</dbReference>
<dbReference type="PROSITE" id="PS00046">
    <property type="entry name" value="HISTONE_H2A"/>
    <property type="match status" value="1"/>
</dbReference>
<reference key="1">
    <citation type="journal article" date="2001" name="Genes Genet. Syst.">
        <title>Molecular evolutionary analysis of a histone gene repeating unit from Drosophila simulans.</title>
        <authorList>
            <person name="Tsunemoto K."/>
            <person name="Matsuo Y."/>
        </authorList>
    </citation>
    <scope>NUCLEOTIDE SEQUENCE [GENOMIC DNA] (HIS2A)</scope>
    <source>
        <strain>s2</strain>
    </source>
</reference>
<reference key="2">
    <citation type="journal article" date="2007" name="Nature">
        <title>Evolution of genes and genomes on the Drosophila phylogeny.</title>
        <authorList>
            <consortium name="Drosophila 12 genomes consortium"/>
        </authorList>
    </citation>
    <scope>NUCLEOTIDE SEQUENCE [LARGE SCALE GENOMIC DNA] (GD24469)</scope>
</reference>
<evidence type="ECO:0000250" key="1"/>
<evidence type="ECO:0000250" key="2">
    <source>
        <dbReference type="UniProtKB" id="P84051"/>
    </source>
</evidence>
<evidence type="ECO:0000256" key="3">
    <source>
        <dbReference type="SAM" id="MobiDB-lite"/>
    </source>
</evidence>
<evidence type="ECO:0000305" key="4"/>
<comment type="function">
    <text>Core component of nucleosome. Nucleosomes wrap and compact DNA into chromatin, limiting DNA accessibility to the cellular machineries which require DNA as a template. Histones thereby play a central role in transcription regulation, DNA repair, DNA replication and chromosomal stability. DNA accessibility is regulated via a complex set of post-translational modifications of histones, also called histone code, and nucleosome remodeling.</text>
</comment>
<comment type="subunit">
    <text>The nucleosome is a histone octamer containing two molecules each of H2A, H2B, H3 and H4 assembled in one H3-H4 heterotetramer and two H2A-H2B heterodimers. The octamer wraps approximately 147 bp of DNA.</text>
</comment>
<comment type="subcellular location">
    <subcellularLocation>
        <location>Nucleus</location>
    </subcellularLocation>
    <subcellularLocation>
        <location>Chromosome</location>
    </subcellularLocation>
</comment>
<comment type="PTM">
    <text evidence="1">The chromatin-associated form, but not the free cytoplasmic form, is phosphorylated on Thr-120 by NHK-1 during mitosis, and dephosphorylated during S-phase. Also phosphorylated on Thr-120 by NHK-1 during prophase I of meiosis; which is required for acetylation of H3 'Lys-14' and H4 'Lys-5', diassembly of the synaptonemal complex, and karyosome formation (By similarity).</text>
</comment>
<comment type="PTM">
    <text evidence="1">Monoubiquitination of Lys-119 by sce/dRING gives a specific tag for epigenetic transcriptional repression.</text>
</comment>
<comment type="PTM">
    <text evidence="1">Phosphorylation on Ser-2 is enhanced during mitosis. Phosphorylation on Ser-2 directly represses transcription (By similarity).</text>
</comment>
<comment type="similarity">
    <text evidence="4">Belongs to the histone H2A family.</text>
</comment>
<organism>
    <name type="scientific">Drosophila simulans</name>
    <name type="common">Fruit fly</name>
    <dbReference type="NCBI Taxonomy" id="7240"/>
    <lineage>
        <taxon>Eukaryota</taxon>
        <taxon>Metazoa</taxon>
        <taxon>Ecdysozoa</taxon>
        <taxon>Arthropoda</taxon>
        <taxon>Hexapoda</taxon>
        <taxon>Insecta</taxon>
        <taxon>Pterygota</taxon>
        <taxon>Neoptera</taxon>
        <taxon>Endopterygota</taxon>
        <taxon>Diptera</taxon>
        <taxon>Brachycera</taxon>
        <taxon>Muscomorpha</taxon>
        <taxon>Ephydroidea</taxon>
        <taxon>Drosophilidae</taxon>
        <taxon>Drosophila</taxon>
        <taxon>Sophophora</taxon>
    </lineage>
</organism>
<proteinExistence type="inferred from homology"/>
<accession>P84054</accession>
<accession>B4NUX3</accession>
<accession>P02267</accession>
<protein>
    <recommendedName>
        <fullName>Histone H2A</fullName>
    </recommendedName>
</protein>